<feature type="signal peptide" evidence="2">
    <location>
        <begin position="1"/>
        <end position="20"/>
    </location>
</feature>
<feature type="chain" id="PRO_0000343868" description="Serpin-like protein HMSD">
    <location>
        <begin position="21"/>
        <end position="139"/>
    </location>
</feature>
<feature type="glycosylation site" description="N-linked (GlcNAc...) asparagine" evidence="2">
    <location>
        <position position="50"/>
    </location>
</feature>
<comment type="function">
    <text evidence="1">Putative serine protease inhibitor.</text>
</comment>
<comment type="subcellular location">
    <subcellularLocation>
        <location evidence="4">Secreted</location>
    </subcellularLocation>
</comment>
<comment type="alternative products">
    <event type="alternative splicing"/>
    <isoform>
        <id>A8MTL9-1</id>
        <name>1</name>
        <name>HMSD</name>
        <sequence type="displayed"/>
    </isoform>
    <isoform>
        <id>P0C7T4-1</id>
        <name>2</name>
        <name>HMSD-v</name>
        <sequence type="external"/>
    </isoform>
</comment>
<comment type="tissue specificity">
    <text evidence="3">Highly expressed in dendritic cells and primary leukemia cells, especially those of myeloid lineage.</text>
</comment>
<comment type="similarity">
    <text evidence="4">Belongs to the serpin family.</text>
</comment>
<reference key="1">
    <citation type="journal article" date="2007" name="Blood">
        <title>Alternative splicing due to an intronic SNP in HMSD generates a novel minor histocompatibility antigen.</title>
        <authorList>
            <person name="Kawase T."/>
            <person name="Akatsuka Y."/>
            <person name="Torikai H."/>
            <person name="Morishima S."/>
            <person name="Oka A."/>
            <person name="Tsujimura A."/>
            <person name="Miyazaki M."/>
            <person name="Tsujimura K."/>
            <person name="Miyamura K."/>
            <person name="Ogawa S."/>
            <person name="Inoko H."/>
            <person name="Morishima Y."/>
            <person name="Kodera Y."/>
            <person name="Kuzushima K."/>
            <person name="Takahashi T."/>
        </authorList>
    </citation>
    <scope>NUCLEOTIDE SEQUENCE [MRNA]</scope>
    <scope>TISSUE SPECIFICITY</scope>
    <scope>ALTERNATIVE SPLICING</scope>
</reference>
<reference key="2">
    <citation type="journal article" date="1996" name="Genome Res.">
        <title>Normalization and subtraction: two approaches to facilitate gene discovery.</title>
        <authorList>
            <person name="Bonaldo M.F."/>
            <person name="Lennon G."/>
            <person name="Soares M.B."/>
        </authorList>
    </citation>
    <scope>NUCLEOTIDE SEQUENCE [LARGE SCALE MRNA]</scope>
</reference>
<reference key="3">
    <citation type="submission" date="1999-12" db="EMBL/GenBank/DDBJ databases">
        <authorList>
            <consortium name="The Cancer Genome Anatomy Project (CGAP) at the National Cancer Institute"/>
        </authorList>
    </citation>
    <scope>NUCLEOTIDE SEQUENCE [LARGE SCALE MRNA]</scope>
</reference>
<reference key="4">
    <citation type="journal article" date="2005" name="Nature">
        <title>DNA sequence and analysis of human chromosome 18.</title>
        <authorList>
            <person name="Nusbaum C."/>
            <person name="Zody M.C."/>
            <person name="Borowsky M.L."/>
            <person name="Kamal M."/>
            <person name="Kodira C.D."/>
            <person name="Taylor T.D."/>
            <person name="Whittaker C.A."/>
            <person name="Chang J.L."/>
            <person name="Cuomo C.A."/>
            <person name="Dewar K."/>
            <person name="FitzGerald M.G."/>
            <person name="Yang X."/>
            <person name="Abouelleil A."/>
            <person name="Allen N.R."/>
            <person name="Anderson S."/>
            <person name="Bloom T."/>
            <person name="Bugalter B."/>
            <person name="Butler J."/>
            <person name="Cook A."/>
            <person name="DeCaprio D."/>
            <person name="Engels R."/>
            <person name="Garber M."/>
            <person name="Gnirke A."/>
            <person name="Hafez N."/>
            <person name="Hall J.L."/>
            <person name="Norman C.H."/>
            <person name="Itoh T."/>
            <person name="Jaffe D.B."/>
            <person name="Kuroki Y."/>
            <person name="Lehoczky J."/>
            <person name="Lui A."/>
            <person name="Macdonald P."/>
            <person name="Mauceli E."/>
            <person name="Mikkelsen T.S."/>
            <person name="Naylor J.W."/>
            <person name="Nicol R."/>
            <person name="Nguyen C."/>
            <person name="Noguchi H."/>
            <person name="O'Leary S.B."/>
            <person name="Piqani B."/>
            <person name="Smith C.L."/>
            <person name="Talamas J.A."/>
            <person name="Topham K."/>
            <person name="Totoki Y."/>
            <person name="Toyoda A."/>
            <person name="Wain H.M."/>
            <person name="Young S.K."/>
            <person name="Zeng Q."/>
            <person name="Zimmer A.R."/>
            <person name="Fujiyama A."/>
            <person name="Hattori M."/>
            <person name="Birren B.W."/>
            <person name="Sakaki Y."/>
            <person name="Lander E.S."/>
        </authorList>
    </citation>
    <scope>NUCLEOTIDE SEQUENCE [LARGE SCALE GENOMIC DNA]</scope>
</reference>
<reference key="5">
    <citation type="submission" date="2005-07" db="EMBL/GenBank/DDBJ databases">
        <authorList>
            <person name="Mural R.J."/>
            <person name="Istrail S."/>
            <person name="Sutton G.G."/>
            <person name="Florea L."/>
            <person name="Halpern A.L."/>
            <person name="Mobarry C.M."/>
            <person name="Lippert R."/>
            <person name="Walenz B."/>
            <person name="Shatkay H."/>
            <person name="Dew I."/>
            <person name="Miller J.R."/>
            <person name="Flanigan M.J."/>
            <person name="Edwards N.J."/>
            <person name="Bolanos R."/>
            <person name="Fasulo D."/>
            <person name="Halldorsson B.V."/>
            <person name="Hannenhalli S."/>
            <person name="Turner R."/>
            <person name="Yooseph S."/>
            <person name="Lu F."/>
            <person name="Nusskern D.R."/>
            <person name="Shue B.C."/>
            <person name="Zheng X.H."/>
            <person name="Zhong F."/>
            <person name="Delcher A.L."/>
            <person name="Huson D.H."/>
            <person name="Kravitz S.A."/>
            <person name="Mouchard L."/>
            <person name="Reinert K."/>
            <person name="Remington K.A."/>
            <person name="Clark A.G."/>
            <person name="Waterman M.S."/>
            <person name="Eichler E.E."/>
            <person name="Adams M.D."/>
            <person name="Hunkapiller M.W."/>
            <person name="Myers E.W."/>
            <person name="Venter J.C."/>
        </authorList>
    </citation>
    <scope>NUCLEOTIDE SEQUENCE [LARGE SCALE GENOMIC DNA]</scope>
</reference>
<accession>A8MTL9</accession>
<sequence>MSISSALAMVFMGAKGNTAAQMSQALCFSKIGGEDGDIHRGFQSLLVAINRTDTEYVLRTANGLFGEKSYDFLTGFTDSCGKFYQATIKQLDFVNDTEKSTTRVNSWVADKTKGENILLFYFDNILNSFIVSSLQNCQI</sequence>
<gene>
    <name type="primary">HMSD</name>
</gene>
<evidence type="ECO:0000250" key="1"/>
<evidence type="ECO:0000255" key="2"/>
<evidence type="ECO:0000269" key="3">
    <source>
    </source>
</evidence>
<evidence type="ECO:0000305" key="4"/>
<name>HMSD_HUMAN</name>
<proteinExistence type="evidence at transcript level"/>
<protein>
    <recommendedName>
        <fullName>Serpin-like protein HMSD</fullName>
    </recommendedName>
    <alternativeName>
        <fullName>Minor histocompatibility protein HMSD</fullName>
    </alternativeName>
    <alternativeName>
        <fullName>Minor histocompatibility serpin domain-containing protein</fullName>
    </alternativeName>
</protein>
<keyword id="KW-0025">Alternative splicing</keyword>
<keyword id="KW-0325">Glycoprotein</keyword>
<keyword id="KW-0646">Protease inhibitor</keyword>
<keyword id="KW-1185">Reference proteome</keyword>
<keyword id="KW-0964">Secreted</keyword>
<keyword id="KW-0722">Serine protease inhibitor</keyword>
<keyword id="KW-0732">Signal</keyword>
<dbReference type="EMBL" id="BM696260">
    <property type="status" value="NOT_ANNOTATED_CDS"/>
    <property type="molecule type" value="mRNA"/>
</dbReference>
<dbReference type="EMBL" id="AW205887">
    <property type="status" value="NOT_ANNOTATED_CDS"/>
    <property type="molecule type" value="mRNA"/>
</dbReference>
<dbReference type="EMBL" id="AC009802">
    <property type="status" value="NOT_ANNOTATED_CDS"/>
    <property type="molecule type" value="Genomic_DNA"/>
</dbReference>
<dbReference type="EMBL" id="CH471096">
    <property type="protein sequence ID" value="EAW63164.1"/>
    <property type="molecule type" value="Genomic_DNA"/>
</dbReference>
<dbReference type="CCDS" id="CCDS42441.1">
    <molecule id="A8MTL9-1"/>
</dbReference>
<dbReference type="RefSeq" id="NP_001116838.1">
    <molecule id="A8MTL9-1"/>
    <property type="nucleotide sequence ID" value="NM_001123366.2"/>
</dbReference>
<dbReference type="SMR" id="A8MTL9"/>
<dbReference type="STRING" id="9606.ENSP00000386207"/>
<dbReference type="GlyCosmos" id="A8MTL9">
    <property type="glycosylation" value="1 site, No reported glycans"/>
</dbReference>
<dbReference type="GlyGen" id="A8MTL9">
    <property type="glycosylation" value="1 site"/>
</dbReference>
<dbReference type="iPTMnet" id="A8MTL9"/>
<dbReference type="PhosphoSitePlus" id="A8MTL9"/>
<dbReference type="BioMuta" id="HMSD"/>
<dbReference type="MassIVE" id="A8MTL9"/>
<dbReference type="PaxDb" id="9606-ENSP00000386207"/>
<dbReference type="ProteomicsDB" id="2034">
    <molecule id="A8MTL9-1"/>
</dbReference>
<dbReference type="DNASU" id="284293"/>
<dbReference type="Ensembl" id="ENST00000408945.5">
    <molecule id="A8MTL9-1"/>
    <property type="protein sequence ID" value="ENSP00000386207.3"/>
    <property type="gene ID" value="ENSG00000221887.6"/>
</dbReference>
<dbReference type="GeneID" id="284293"/>
<dbReference type="KEGG" id="hsa:284293"/>
<dbReference type="MANE-Select" id="ENST00000408945.5">
    <property type="protein sequence ID" value="ENSP00000386207.3"/>
    <property type="RefSeq nucleotide sequence ID" value="NM_001123366.2"/>
    <property type="RefSeq protein sequence ID" value="NP_001116838.1"/>
</dbReference>
<dbReference type="UCSC" id="uc010dqj.4">
    <molecule id="A8MTL9-1"/>
    <property type="organism name" value="human"/>
</dbReference>
<dbReference type="AGR" id="HGNC:23037"/>
<dbReference type="CTD" id="284293"/>
<dbReference type="DisGeNET" id="284293"/>
<dbReference type="GeneCards" id="HMSD"/>
<dbReference type="HGNC" id="HGNC:23037">
    <property type="gene designation" value="HMSD"/>
</dbReference>
<dbReference type="HPA" id="ENSG00000221887">
    <property type="expression patterns" value="Tissue enriched (brain)"/>
</dbReference>
<dbReference type="MIM" id="612086">
    <property type="type" value="gene"/>
</dbReference>
<dbReference type="neXtProt" id="NX_A8MTL9"/>
<dbReference type="OpenTargets" id="ENSG00000221887"/>
<dbReference type="PharmGKB" id="PA162391030"/>
<dbReference type="VEuPathDB" id="HostDB:ENSG00000221887"/>
<dbReference type="eggNOG" id="KOG2392">
    <property type="taxonomic scope" value="Eukaryota"/>
</dbReference>
<dbReference type="GeneTree" id="ENSGT00940000154519"/>
<dbReference type="HOGENOM" id="CLU_023330_5_3_1"/>
<dbReference type="InParanoid" id="A8MTL9"/>
<dbReference type="OMA" id="TTRVNSW"/>
<dbReference type="OrthoDB" id="9681056at2759"/>
<dbReference type="PAN-GO" id="A8MTL9">
    <property type="GO annotations" value="0 GO annotations based on evolutionary models"/>
</dbReference>
<dbReference type="PhylomeDB" id="A8MTL9"/>
<dbReference type="PathwayCommons" id="A8MTL9"/>
<dbReference type="SignaLink" id="A8MTL9"/>
<dbReference type="BioGRID-ORCS" id="284293">
    <property type="hits" value="13 hits in 1130 CRISPR screens"/>
</dbReference>
<dbReference type="ChiTaRS" id="HMSD">
    <property type="organism name" value="human"/>
</dbReference>
<dbReference type="GenomeRNAi" id="284293"/>
<dbReference type="Pharos" id="A8MTL9">
    <property type="development level" value="Tdark"/>
</dbReference>
<dbReference type="Proteomes" id="UP000005640">
    <property type="component" value="Chromosome 18"/>
</dbReference>
<dbReference type="RNAct" id="A8MTL9">
    <property type="molecule type" value="protein"/>
</dbReference>
<dbReference type="Bgee" id="ENSG00000221887">
    <property type="expression patterns" value="Expressed in C1 segment of cervical spinal cord and 95 other cell types or tissues"/>
</dbReference>
<dbReference type="ExpressionAtlas" id="A8MTL9">
    <property type="expression patterns" value="baseline and differential"/>
</dbReference>
<dbReference type="GO" id="GO:0005615">
    <property type="term" value="C:extracellular space"/>
    <property type="evidence" value="ECO:0007669"/>
    <property type="project" value="InterPro"/>
</dbReference>
<dbReference type="GO" id="GO:0004867">
    <property type="term" value="F:serine-type endopeptidase inhibitor activity"/>
    <property type="evidence" value="ECO:0007669"/>
    <property type="project" value="UniProtKB-KW"/>
</dbReference>
<dbReference type="GO" id="GO:0002253">
    <property type="term" value="P:activation of immune response"/>
    <property type="evidence" value="ECO:0000314"/>
    <property type="project" value="UniProtKB"/>
</dbReference>
<dbReference type="FunFam" id="3.30.497.10:FF:000018">
    <property type="entry name" value="Serpin family B member 8"/>
    <property type="match status" value="1"/>
</dbReference>
<dbReference type="Gene3D" id="3.30.497.10">
    <property type="entry name" value="Antithrombin, subunit I, domain 2"/>
    <property type="match status" value="1"/>
</dbReference>
<dbReference type="InterPro" id="IPR023796">
    <property type="entry name" value="Serpin_dom"/>
</dbReference>
<dbReference type="InterPro" id="IPR000215">
    <property type="entry name" value="Serpin_fam"/>
</dbReference>
<dbReference type="InterPro" id="IPR036186">
    <property type="entry name" value="Serpin_sf"/>
</dbReference>
<dbReference type="InterPro" id="IPR042178">
    <property type="entry name" value="Serpin_sf_1"/>
</dbReference>
<dbReference type="PANTHER" id="PTHR11461">
    <property type="entry name" value="SERINE PROTEASE INHIBITOR, SERPIN"/>
    <property type="match status" value="1"/>
</dbReference>
<dbReference type="PANTHER" id="PTHR11461:SF204">
    <property type="entry name" value="SERPIN B6"/>
    <property type="match status" value="1"/>
</dbReference>
<dbReference type="Pfam" id="PF00079">
    <property type="entry name" value="Serpin"/>
    <property type="match status" value="1"/>
</dbReference>
<dbReference type="SUPFAM" id="SSF56574">
    <property type="entry name" value="Serpins"/>
    <property type="match status" value="1"/>
</dbReference>
<organism>
    <name type="scientific">Homo sapiens</name>
    <name type="common">Human</name>
    <dbReference type="NCBI Taxonomy" id="9606"/>
    <lineage>
        <taxon>Eukaryota</taxon>
        <taxon>Metazoa</taxon>
        <taxon>Chordata</taxon>
        <taxon>Craniata</taxon>
        <taxon>Vertebrata</taxon>
        <taxon>Euteleostomi</taxon>
        <taxon>Mammalia</taxon>
        <taxon>Eutheria</taxon>
        <taxon>Euarchontoglires</taxon>
        <taxon>Primates</taxon>
        <taxon>Haplorrhini</taxon>
        <taxon>Catarrhini</taxon>
        <taxon>Hominidae</taxon>
        <taxon>Homo</taxon>
    </lineage>
</organism>